<feature type="chain" id="PRO_0000234662" description="Meiotic coiled-coil protein 2">
    <location>
        <begin position="1"/>
        <end position="703"/>
    </location>
</feature>
<feature type="domain" description="PUM-HD" evidence="1">
    <location>
        <begin position="331"/>
        <end position="686"/>
    </location>
</feature>
<feature type="repeat" description="Pumilio 1">
    <location>
        <begin position="361"/>
        <end position="396"/>
    </location>
</feature>
<feature type="repeat" description="Pumilio 2">
    <location>
        <begin position="397"/>
        <end position="432"/>
    </location>
</feature>
<feature type="repeat" description="Pumilio 3">
    <location>
        <begin position="433"/>
        <end position="468"/>
    </location>
</feature>
<feature type="repeat" description="Pumilio 4">
    <location>
        <begin position="469"/>
        <end position="504"/>
    </location>
</feature>
<feature type="repeat" description="Pumilio 5">
    <location>
        <begin position="509"/>
        <end position="544"/>
    </location>
</feature>
<feature type="repeat" description="Pumilio 6">
    <location>
        <begin position="545"/>
        <end position="580"/>
    </location>
</feature>
<feature type="repeat" description="Pumilio 7">
    <location>
        <begin position="581"/>
        <end position="616"/>
    </location>
</feature>
<feature type="repeat" description="Pumilio 8">
    <location>
        <begin position="625"/>
        <end position="660"/>
    </location>
</feature>
<feature type="region of interest" description="Disordered" evidence="2">
    <location>
        <begin position="1"/>
        <end position="29"/>
    </location>
</feature>
<feature type="region of interest" description="Disordered" evidence="2">
    <location>
        <begin position="245"/>
        <end position="265"/>
    </location>
</feature>
<feature type="region of interest" description="Disordered" evidence="2">
    <location>
        <begin position="284"/>
        <end position="309"/>
    </location>
</feature>
<feature type="compositionally biased region" description="Polar residues" evidence="2">
    <location>
        <begin position="1"/>
        <end position="19"/>
    </location>
</feature>
<feature type="compositionally biased region" description="Polar residues" evidence="2">
    <location>
        <begin position="245"/>
        <end position="258"/>
    </location>
</feature>
<organism>
    <name type="scientific">Schizosaccharomyces pombe (strain 972 / ATCC 24843)</name>
    <name type="common">Fission yeast</name>
    <dbReference type="NCBI Taxonomy" id="284812"/>
    <lineage>
        <taxon>Eukaryota</taxon>
        <taxon>Fungi</taxon>
        <taxon>Dikarya</taxon>
        <taxon>Ascomycota</taxon>
        <taxon>Taphrinomycotina</taxon>
        <taxon>Schizosaccharomycetes</taxon>
        <taxon>Schizosaccharomycetales</taxon>
        <taxon>Schizosaccharomycetaceae</taxon>
        <taxon>Schizosaccharomyces</taxon>
    </lineage>
</organism>
<sequence>MQSIDLRLPSTSANHSISESLEHSKSELNELSNVSESESYFDITKKLHALSTVVQRQQREIDNQKRDLCTKTKHIEELQTLLSNANIMSDGASSQNDAFAHNPSTSVSVELVRPVVGTKKHAVYATSAPKSMSLQDSLSVPSATALADVSSSLNYSRKLSSNSIKSTNAPVFGTAVKNVTGENILSASSSEENLNSNRNGDPKFRFSVSPWISSSNFNPYEASLANFQSDNCKLKSHNSLPSIRTNVRYSNSKPSTPLSPEDVDLGTYTVKNRDSWSNEVNLSASTNNLSTNTSGTLKPYSLSSSRSSSYSKGVNSAASLQSIWETMNNSNPSVIPESTSSREPAARYRKISERNAVYDWNVIIDKIIVSNDQQSSIFLQQKLKISSYDMKQNIVDSIISQIHPLMLNRFGNFLVQRCFEHGTAPQIRQMGSAMLGNMLKLATDPFGCHVVQKAIDNVTEDIKLAMMDELFLTIDVTIMHHYACHVWQKLFETQWYEYPVNVMNRVNNALRGKWHEVAVGENGSLVVQNMFENCVEKDKRECIEEIIFHLDGIARGQWGNWVVQHMVENGQGEDLKRVIDALLNRAVEFSIDQFASKVIEKAIKSGPKNFISLYLKQITNARVDRTRQPLIDIASDQYGNYLIQQIIQLGQPAEKNLVITHIKKHMVSLRGSKYGQKVAYLVEKWNSQKQVSSVINYNCNTDL</sequence>
<gene>
    <name type="primary">mcp2</name>
    <name type="ORF">SPCC1682.08c</name>
</gene>
<protein>
    <recommendedName>
        <fullName>Meiotic coiled-coil protein 2</fullName>
    </recommendedName>
</protein>
<name>MCP2_SCHPO</name>
<accession>O74438</accession>
<proteinExistence type="predicted"/>
<evidence type="ECO:0000255" key="1">
    <source>
        <dbReference type="PROSITE-ProRule" id="PRU00318"/>
    </source>
</evidence>
<evidence type="ECO:0000256" key="2">
    <source>
        <dbReference type="SAM" id="MobiDB-lite"/>
    </source>
</evidence>
<dbReference type="EMBL" id="AB189990">
    <property type="protein sequence ID" value="BAD42852.2"/>
    <property type="molecule type" value="Genomic_DNA"/>
</dbReference>
<dbReference type="EMBL" id="CU329672">
    <property type="protein sequence ID" value="CAA20674.1"/>
    <property type="molecule type" value="Genomic_DNA"/>
</dbReference>
<dbReference type="PIR" id="T41065">
    <property type="entry name" value="T41065"/>
</dbReference>
<dbReference type="RefSeq" id="NP_587801.1">
    <property type="nucleotide sequence ID" value="NM_001022794.2"/>
</dbReference>
<dbReference type="SMR" id="O74438"/>
<dbReference type="BioGRID" id="275709">
    <property type="interactions" value="42"/>
</dbReference>
<dbReference type="FunCoup" id="O74438">
    <property type="interactions" value="419"/>
</dbReference>
<dbReference type="STRING" id="284812.O74438"/>
<dbReference type="SwissPalm" id="O74438"/>
<dbReference type="PaxDb" id="4896-SPCC1682.08c.1"/>
<dbReference type="EnsemblFungi" id="SPCC1682.08c.1">
    <property type="protein sequence ID" value="SPCC1682.08c.1:pep"/>
    <property type="gene ID" value="SPCC1682.08c"/>
</dbReference>
<dbReference type="GeneID" id="2539137"/>
<dbReference type="KEGG" id="spo:2539137"/>
<dbReference type="PomBase" id="SPCC1682.08c">
    <property type="gene designation" value="mcp2"/>
</dbReference>
<dbReference type="VEuPathDB" id="FungiDB:SPCC1682.08c"/>
<dbReference type="eggNOG" id="KOG1488">
    <property type="taxonomic scope" value="Eukaryota"/>
</dbReference>
<dbReference type="HOGENOM" id="CLU_009803_1_0_1"/>
<dbReference type="InParanoid" id="O74438"/>
<dbReference type="OMA" id="TIMHHYA"/>
<dbReference type="PhylomeDB" id="O74438"/>
<dbReference type="PRO" id="PR:O74438"/>
<dbReference type="Proteomes" id="UP000002485">
    <property type="component" value="Chromosome III"/>
</dbReference>
<dbReference type="GO" id="GO:0005737">
    <property type="term" value="C:cytoplasm"/>
    <property type="evidence" value="ECO:0007005"/>
    <property type="project" value="PomBase"/>
</dbReference>
<dbReference type="GO" id="GO:0000932">
    <property type="term" value="C:P-body"/>
    <property type="evidence" value="ECO:0000269"/>
    <property type="project" value="PomBase"/>
</dbReference>
<dbReference type="GO" id="GO:0003730">
    <property type="term" value="F:mRNA 3'-UTR binding"/>
    <property type="evidence" value="ECO:0000318"/>
    <property type="project" value="GO_Central"/>
</dbReference>
<dbReference type="GO" id="GO:0051321">
    <property type="term" value="P:meiotic cell cycle"/>
    <property type="evidence" value="ECO:0007669"/>
    <property type="project" value="UniProtKB-KW"/>
</dbReference>
<dbReference type="GO" id="GO:0000288">
    <property type="term" value="P:nuclear-transcribed mRNA catabolic process, deadenylation-dependent decay"/>
    <property type="evidence" value="ECO:0000266"/>
    <property type="project" value="PomBase"/>
</dbReference>
<dbReference type="GO" id="GO:0010608">
    <property type="term" value="P:post-transcriptional regulation of gene expression"/>
    <property type="evidence" value="ECO:0000318"/>
    <property type="project" value="GO_Central"/>
</dbReference>
<dbReference type="CDD" id="cd07920">
    <property type="entry name" value="Pumilio"/>
    <property type="match status" value="1"/>
</dbReference>
<dbReference type="FunFam" id="1.25.10.10:FF:001564">
    <property type="entry name" value="Meiotic PUF family protein 1"/>
    <property type="match status" value="1"/>
</dbReference>
<dbReference type="Gene3D" id="1.25.10.10">
    <property type="entry name" value="Leucine-rich Repeat Variant"/>
    <property type="match status" value="1"/>
</dbReference>
<dbReference type="InterPro" id="IPR011989">
    <property type="entry name" value="ARM-like"/>
</dbReference>
<dbReference type="InterPro" id="IPR016024">
    <property type="entry name" value="ARM-type_fold"/>
</dbReference>
<dbReference type="InterPro" id="IPR033133">
    <property type="entry name" value="PUM-HD"/>
</dbReference>
<dbReference type="InterPro" id="IPR033712">
    <property type="entry name" value="Pumilio_RNA-bd"/>
</dbReference>
<dbReference type="InterPro" id="IPR001313">
    <property type="entry name" value="Pumilio_RNA-bd_rpt"/>
</dbReference>
<dbReference type="PANTHER" id="PTHR12537:SF48">
    <property type="entry name" value="MEIOTIC COILED-COIL PROTEIN 2"/>
    <property type="match status" value="1"/>
</dbReference>
<dbReference type="PANTHER" id="PTHR12537">
    <property type="entry name" value="RNA BINDING PROTEIN PUMILIO-RELATED"/>
    <property type="match status" value="1"/>
</dbReference>
<dbReference type="Pfam" id="PF00806">
    <property type="entry name" value="PUF"/>
    <property type="match status" value="8"/>
</dbReference>
<dbReference type="SMART" id="SM00025">
    <property type="entry name" value="Pumilio"/>
    <property type="match status" value="8"/>
</dbReference>
<dbReference type="SUPFAM" id="SSF48371">
    <property type="entry name" value="ARM repeat"/>
    <property type="match status" value="1"/>
</dbReference>
<dbReference type="PROSITE" id="PS50302">
    <property type="entry name" value="PUM"/>
    <property type="match status" value="9"/>
</dbReference>
<dbReference type="PROSITE" id="PS50303">
    <property type="entry name" value="PUM_HD"/>
    <property type="match status" value="1"/>
</dbReference>
<keyword id="KW-0469">Meiosis</keyword>
<keyword id="KW-1185">Reference proteome</keyword>
<keyword id="KW-0677">Repeat</keyword>
<keyword id="KW-0694">RNA-binding</keyword>
<reference key="1">
    <citation type="journal article" date="2007" name="Cell Div.">
        <title>Meiosis specific coiled-coil proteins in Shizosaccharomyces pombe.</title>
        <authorList>
            <person name="Ohtaka A."/>
            <person name="Saito T.T."/>
            <person name="Okuzaki D."/>
            <person name="Nojima H."/>
        </authorList>
    </citation>
    <scope>NUCLEOTIDE SEQUENCE [GENOMIC DNA]</scope>
</reference>
<reference key="2">
    <citation type="journal article" date="2002" name="Nature">
        <title>The genome sequence of Schizosaccharomyces pombe.</title>
        <authorList>
            <person name="Wood V."/>
            <person name="Gwilliam R."/>
            <person name="Rajandream M.A."/>
            <person name="Lyne M.H."/>
            <person name="Lyne R."/>
            <person name="Stewart A."/>
            <person name="Sgouros J.G."/>
            <person name="Peat N."/>
            <person name="Hayles J."/>
            <person name="Baker S.G."/>
            <person name="Basham D."/>
            <person name="Bowman S."/>
            <person name="Brooks K."/>
            <person name="Brown D."/>
            <person name="Brown S."/>
            <person name="Chillingworth T."/>
            <person name="Churcher C.M."/>
            <person name="Collins M."/>
            <person name="Connor R."/>
            <person name="Cronin A."/>
            <person name="Davis P."/>
            <person name="Feltwell T."/>
            <person name="Fraser A."/>
            <person name="Gentles S."/>
            <person name="Goble A."/>
            <person name="Hamlin N."/>
            <person name="Harris D.E."/>
            <person name="Hidalgo J."/>
            <person name="Hodgson G."/>
            <person name="Holroyd S."/>
            <person name="Hornsby T."/>
            <person name="Howarth S."/>
            <person name="Huckle E.J."/>
            <person name="Hunt S."/>
            <person name="Jagels K."/>
            <person name="James K.D."/>
            <person name="Jones L."/>
            <person name="Jones M."/>
            <person name="Leather S."/>
            <person name="McDonald S."/>
            <person name="McLean J."/>
            <person name="Mooney P."/>
            <person name="Moule S."/>
            <person name="Mungall K.L."/>
            <person name="Murphy L.D."/>
            <person name="Niblett D."/>
            <person name="Odell C."/>
            <person name="Oliver K."/>
            <person name="O'Neil S."/>
            <person name="Pearson D."/>
            <person name="Quail M.A."/>
            <person name="Rabbinowitsch E."/>
            <person name="Rutherford K.M."/>
            <person name="Rutter S."/>
            <person name="Saunders D."/>
            <person name="Seeger K."/>
            <person name="Sharp S."/>
            <person name="Skelton J."/>
            <person name="Simmonds M.N."/>
            <person name="Squares R."/>
            <person name="Squares S."/>
            <person name="Stevens K."/>
            <person name="Taylor K."/>
            <person name="Taylor R.G."/>
            <person name="Tivey A."/>
            <person name="Walsh S.V."/>
            <person name="Warren T."/>
            <person name="Whitehead S."/>
            <person name="Woodward J.R."/>
            <person name="Volckaert G."/>
            <person name="Aert R."/>
            <person name="Robben J."/>
            <person name="Grymonprez B."/>
            <person name="Weltjens I."/>
            <person name="Vanstreels E."/>
            <person name="Rieger M."/>
            <person name="Schaefer M."/>
            <person name="Mueller-Auer S."/>
            <person name="Gabel C."/>
            <person name="Fuchs M."/>
            <person name="Duesterhoeft A."/>
            <person name="Fritzc C."/>
            <person name="Holzer E."/>
            <person name="Moestl D."/>
            <person name="Hilbert H."/>
            <person name="Borzym K."/>
            <person name="Langer I."/>
            <person name="Beck A."/>
            <person name="Lehrach H."/>
            <person name="Reinhardt R."/>
            <person name="Pohl T.M."/>
            <person name="Eger P."/>
            <person name="Zimmermann W."/>
            <person name="Wedler H."/>
            <person name="Wambutt R."/>
            <person name="Purnelle B."/>
            <person name="Goffeau A."/>
            <person name="Cadieu E."/>
            <person name="Dreano S."/>
            <person name="Gloux S."/>
            <person name="Lelaure V."/>
            <person name="Mottier S."/>
            <person name="Galibert F."/>
            <person name="Aves S.J."/>
            <person name="Xiang Z."/>
            <person name="Hunt C."/>
            <person name="Moore K."/>
            <person name="Hurst S.M."/>
            <person name="Lucas M."/>
            <person name="Rochet M."/>
            <person name="Gaillardin C."/>
            <person name="Tallada V.A."/>
            <person name="Garzon A."/>
            <person name="Thode G."/>
            <person name="Daga R.R."/>
            <person name="Cruzado L."/>
            <person name="Jimenez J."/>
            <person name="Sanchez M."/>
            <person name="del Rey F."/>
            <person name="Benito J."/>
            <person name="Dominguez A."/>
            <person name="Revuelta J.L."/>
            <person name="Moreno S."/>
            <person name="Armstrong J."/>
            <person name="Forsburg S.L."/>
            <person name="Cerutti L."/>
            <person name="Lowe T."/>
            <person name="McCombie W.R."/>
            <person name="Paulsen I."/>
            <person name="Potashkin J."/>
            <person name="Shpakovski G.V."/>
            <person name="Ussery D."/>
            <person name="Barrell B.G."/>
            <person name="Nurse P."/>
        </authorList>
    </citation>
    <scope>NUCLEOTIDE SEQUENCE [LARGE SCALE GENOMIC DNA]</scope>
    <source>
        <strain>972 / ATCC 24843</strain>
    </source>
</reference>